<sequence length="344" mass="37390">MSNAITMGIFWHLIGAASAACFYAPFKQVKQWSWETMWSVGGIVSWLILPWTISALLLPDFWAYYGQFNLSTLLPVFLFGAMWGIGNINYGLTMRYLGMSMGIGIAIGITLIVGTLMTPIINGNFDVLIHTEGGRMTLLGVFVALIGVGIVTRAGQLKERKMGIKAEEFNLKKGLLLAVMCGIFSAGMSFAMNAAKPMHEAAAALGVDPLYVALPSYVVIMGGGALVNLGFCFIRLAKVQNLSIKADFSLARPLIISNILLSALGGLMWYLQFFFYAWGHARIPAQYDYMSWMLHMSFYVLCGGLVGLVLKEWKNAGRRPVAVLSLGCVVIIIAANIVGLGMAS</sequence>
<feature type="chain" id="PRO_1000146499" description="L-rhamnose-proton symporter">
    <location>
        <begin position="1"/>
        <end position="344"/>
    </location>
</feature>
<feature type="transmembrane region" description="Helical" evidence="1">
    <location>
        <begin position="4"/>
        <end position="24"/>
    </location>
</feature>
<feature type="transmembrane region" description="Helical" evidence="1">
    <location>
        <begin position="38"/>
        <end position="58"/>
    </location>
</feature>
<feature type="transmembrane region" description="Helical" evidence="1">
    <location>
        <begin position="68"/>
        <end position="88"/>
    </location>
</feature>
<feature type="transmembrane region" description="Helical" evidence="1">
    <location>
        <begin position="101"/>
        <end position="121"/>
    </location>
</feature>
<feature type="transmembrane region" description="Helical" evidence="1">
    <location>
        <begin position="137"/>
        <end position="157"/>
    </location>
</feature>
<feature type="transmembrane region" description="Helical" evidence="1">
    <location>
        <begin position="175"/>
        <end position="195"/>
    </location>
</feature>
<feature type="transmembrane region" description="Helical" evidence="1">
    <location>
        <begin position="214"/>
        <end position="234"/>
    </location>
</feature>
<feature type="transmembrane region" description="Helical" evidence="1">
    <location>
        <begin position="259"/>
        <end position="279"/>
    </location>
</feature>
<feature type="transmembrane region" description="Helical" evidence="1">
    <location>
        <begin position="290"/>
        <end position="310"/>
    </location>
</feature>
<feature type="transmembrane region" description="Helical" evidence="1">
    <location>
        <begin position="321"/>
        <end position="341"/>
    </location>
</feature>
<keyword id="KW-0997">Cell inner membrane</keyword>
<keyword id="KW-1003">Cell membrane</keyword>
<keyword id="KW-0472">Membrane</keyword>
<keyword id="KW-0762">Sugar transport</keyword>
<keyword id="KW-0769">Symport</keyword>
<keyword id="KW-0812">Transmembrane</keyword>
<keyword id="KW-1133">Transmembrane helix</keyword>
<keyword id="KW-0813">Transport</keyword>
<accession>B4SZZ5</accession>
<protein>
    <recommendedName>
        <fullName evidence="1">L-rhamnose-proton symporter</fullName>
    </recommendedName>
    <alternativeName>
        <fullName evidence="1">L-rhamnose-H(+) transport protein</fullName>
    </alternativeName>
</protein>
<name>RHAT_SALNS</name>
<evidence type="ECO:0000255" key="1">
    <source>
        <dbReference type="HAMAP-Rule" id="MF_01532"/>
    </source>
</evidence>
<organism>
    <name type="scientific">Salmonella newport (strain SL254)</name>
    <dbReference type="NCBI Taxonomy" id="423368"/>
    <lineage>
        <taxon>Bacteria</taxon>
        <taxon>Pseudomonadati</taxon>
        <taxon>Pseudomonadota</taxon>
        <taxon>Gammaproteobacteria</taxon>
        <taxon>Enterobacterales</taxon>
        <taxon>Enterobacteriaceae</taxon>
        <taxon>Salmonella</taxon>
    </lineage>
</organism>
<gene>
    <name evidence="1" type="primary">rhaT</name>
    <name type="ordered locus">SNSL254_A4333</name>
</gene>
<proteinExistence type="inferred from homology"/>
<reference key="1">
    <citation type="journal article" date="2011" name="J. Bacteriol.">
        <title>Comparative genomics of 28 Salmonella enterica isolates: evidence for CRISPR-mediated adaptive sublineage evolution.</title>
        <authorList>
            <person name="Fricke W.F."/>
            <person name="Mammel M.K."/>
            <person name="McDermott P.F."/>
            <person name="Tartera C."/>
            <person name="White D.G."/>
            <person name="Leclerc J.E."/>
            <person name="Ravel J."/>
            <person name="Cebula T.A."/>
        </authorList>
    </citation>
    <scope>NUCLEOTIDE SEQUENCE [LARGE SCALE GENOMIC DNA]</scope>
    <source>
        <strain>SL254</strain>
    </source>
</reference>
<dbReference type="EMBL" id="CP001113">
    <property type="protein sequence ID" value="ACF65430.1"/>
    <property type="molecule type" value="Genomic_DNA"/>
</dbReference>
<dbReference type="RefSeq" id="WP_000063541.1">
    <property type="nucleotide sequence ID" value="NZ_CCMR01000001.1"/>
</dbReference>
<dbReference type="KEGG" id="see:SNSL254_A4333"/>
<dbReference type="HOGENOM" id="CLU_066437_0_0_6"/>
<dbReference type="Proteomes" id="UP000008824">
    <property type="component" value="Chromosome"/>
</dbReference>
<dbReference type="GO" id="GO:0005886">
    <property type="term" value="C:plasma membrane"/>
    <property type="evidence" value="ECO:0007669"/>
    <property type="project" value="UniProtKB-SubCell"/>
</dbReference>
<dbReference type="GO" id="GO:0015153">
    <property type="term" value="F:rhamnose transmembrane transporter activity"/>
    <property type="evidence" value="ECO:0007669"/>
    <property type="project" value="UniProtKB-UniRule"/>
</dbReference>
<dbReference type="GO" id="GO:0015293">
    <property type="term" value="F:symporter activity"/>
    <property type="evidence" value="ECO:0007669"/>
    <property type="project" value="UniProtKB-KW"/>
</dbReference>
<dbReference type="HAMAP" id="MF_01532">
    <property type="entry name" value="RhaT"/>
    <property type="match status" value="1"/>
</dbReference>
<dbReference type="InterPro" id="IPR004673">
    <property type="entry name" value="L-rhamnose-proton_sym_RhaT"/>
</dbReference>
<dbReference type="NCBIfam" id="NF010021">
    <property type="entry name" value="PRK13499.1-1"/>
    <property type="match status" value="1"/>
</dbReference>
<dbReference type="NCBIfam" id="NF010023">
    <property type="entry name" value="PRK13499.1-3"/>
    <property type="match status" value="1"/>
</dbReference>
<dbReference type="NCBIfam" id="TIGR00776">
    <property type="entry name" value="RhaT"/>
    <property type="match status" value="1"/>
</dbReference>
<dbReference type="Pfam" id="PF06379">
    <property type="entry name" value="RhaT"/>
    <property type="match status" value="1"/>
</dbReference>
<comment type="function">
    <text evidence="1">Uptake of L-rhamnose across the cytoplasmic membrane with the concomitant transport of protons into the cell (symport system).</text>
</comment>
<comment type="catalytic activity">
    <reaction evidence="1">
        <text>L-rhamnopyranose(in) + H(+)(in) = L-rhamnopyranose(out) + H(+)(out)</text>
        <dbReference type="Rhea" id="RHEA:29947"/>
        <dbReference type="ChEBI" id="CHEBI:15378"/>
        <dbReference type="ChEBI" id="CHEBI:62346"/>
    </reaction>
    <physiologicalReaction direction="right-to-left" evidence="1">
        <dbReference type="Rhea" id="RHEA:29949"/>
    </physiologicalReaction>
</comment>
<comment type="subcellular location">
    <subcellularLocation>
        <location evidence="1">Cell inner membrane</location>
        <topology evidence="1">Multi-pass membrane protein</topology>
    </subcellularLocation>
</comment>
<comment type="similarity">
    <text evidence="1">Belongs to the L-rhamnose transporter (TC 2.A.7.6) family.</text>
</comment>